<sequence length="226" mass="24596">MAALLITATDTEVGKTVLTTSLTAYWQTYRGKKGLGLMKLLQTGVGDQERYHQLFGADSSIEIKVPLWFKTPVAPPVAAAAEGKTIDLKRVWQEFCALQQRQSFVLLEALGGLGSPVTEELTVADIAGQWRLETVLVVPVKLGAIAQAVANVALARQHQIKLKGIILNCSQPISEEQLKDWTPINLIQSLTSTPVLGILPYISDLNDLEKLTQAASTLDLEKLLPL</sequence>
<dbReference type="EC" id="6.3.3.3" evidence="2"/>
<dbReference type="EMBL" id="CP001291">
    <property type="protein sequence ID" value="ACK73049.1"/>
    <property type="molecule type" value="Genomic_DNA"/>
</dbReference>
<dbReference type="RefSeq" id="WP_015956632.1">
    <property type="nucleotide sequence ID" value="NC_011729.1"/>
</dbReference>
<dbReference type="SMR" id="B7KBS1"/>
<dbReference type="STRING" id="65393.PCC7424_4689"/>
<dbReference type="KEGG" id="cyc:PCC7424_4689"/>
<dbReference type="eggNOG" id="COG0132">
    <property type="taxonomic scope" value="Bacteria"/>
</dbReference>
<dbReference type="HOGENOM" id="CLU_072551_3_1_3"/>
<dbReference type="OrthoDB" id="9802097at2"/>
<dbReference type="UniPathway" id="UPA00078">
    <property type="reaction ID" value="UER00161"/>
</dbReference>
<dbReference type="Proteomes" id="UP000002384">
    <property type="component" value="Chromosome"/>
</dbReference>
<dbReference type="GO" id="GO:0005829">
    <property type="term" value="C:cytosol"/>
    <property type="evidence" value="ECO:0007669"/>
    <property type="project" value="TreeGrafter"/>
</dbReference>
<dbReference type="GO" id="GO:0005524">
    <property type="term" value="F:ATP binding"/>
    <property type="evidence" value="ECO:0007669"/>
    <property type="project" value="UniProtKB-UniRule"/>
</dbReference>
<dbReference type="GO" id="GO:0004141">
    <property type="term" value="F:dethiobiotin synthase activity"/>
    <property type="evidence" value="ECO:0007669"/>
    <property type="project" value="UniProtKB-UniRule"/>
</dbReference>
<dbReference type="GO" id="GO:0000287">
    <property type="term" value="F:magnesium ion binding"/>
    <property type="evidence" value="ECO:0007669"/>
    <property type="project" value="UniProtKB-UniRule"/>
</dbReference>
<dbReference type="GO" id="GO:0009102">
    <property type="term" value="P:biotin biosynthetic process"/>
    <property type="evidence" value="ECO:0007669"/>
    <property type="project" value="UniProtKB-UniRule"/>
</dbReference>
<dbReference type="CDD" id="cd03109">
    <property type="entry name" value="DTBS"/>
    <property type="match status" value="1"/>
</dbReference>
<dbReference type="Gene3D" id="3.40.50.300">
    <property type="entry name" value="P-loop containing nucleotide triphosphate hydrolases"/>
    <property type="match status" value="1"/>
</dbReference>
<dbReference type="HAMAP" id="MF_00336">
    <property type="entry name" value="BioD"/>
    <property type="match status" value="1"/>
</dbReference>
<dbReference type="InterPro" id="IPR004472">
    <property type="entry name" value="DTB_synth_BioD"/>
</dbReference>
<dbReference type="InterPro" id="IPR027417">
    <property type="entry name" value="P-loop_NTPase"/>
</dbReference>
<dbReference type="NCBIfam" id="TIGR00347">
    <property type="entry name" value="bioD"/>
    <property type="match status" value="1"/>
</dbReference>
<dbReference type="PANTHER" id="PTHR43210:SF2">
    <property type="entry name" value="ATP-DEPENDENT DETHIOBIOTIN SYNTHETASE BIOD 2"/>
    <property type="match status" value="1"/>
</dbReference>
<dbReference type="PANTHER" id="PTHR43210">
    <property type="entry name" value="DETHIOBIOTIN SYNTHETASE"/>
    <property type="match status" value="1"/>
</dbReference>
<dbReference type="Pfam" id="PF13500">
    <property type="entry name" value="AAA_26"/>
    <property type="match status" value="1"/>
</dbReference>
<dbReference type="PIRSF" id="PIRSF006755">
    <property type="entry name" value="DTB_synth"/>
    <property type="match status" value="1"/>
</dbReference>
<dbReference type="SUPFAM" id="SSF52540">
    <property type="entry name" value="P-loop containing nucleoside triphosphate hydrolases"/>
    <property type="match status" value="1"/>
</dbReference>
<proteinExistence type="inferred from homology"/>
<accession>B7KBS1</accession>
<evidence type="ECO:0000250" key="1">
    <source>
        <dbReference type="UniProtKB" id="Q55849"/>
    </source>
</evidence>
<evidence type="ECO:0000255" key="2">
    <source>
        <dbReference type="HAMAP-Rule" id="MF_00336"/>
    </source>
</evidence>
<evidence type="ECO:0000305" key="3"/>
<protein>
    <recommendedName>
        <fullName evidence="2">ATP-dependent dethiobiotin synthetase BioD</fullName>
        <ecNumber evidence="2">6.3.3.3</ecNumber>
    </recommendedName>
    <alternativeName>
        <fullName evidence="2">DTB synthetase</fullName>
        <shortName evidence="2">DTBS</shortName>
    </alternativeName>
    <alternativeName>
        <fullName evidence="2">Dethiobiotin synthase</fullName>
    </alternativeName>
</protein>
<keyword id="KW-0067">ATP-binding</keyword>
<keyword id="KW-0093">Biotin biosynthesis</keyword>
<keyword id="KW-0963">Cytoplasm</keyword>
<keyword id="KW-0436">Ligase</keyword>
<keyword id="KW-0460">Magnesium</keyword>
<keyword id="KW-0479">Metal-binding</keyword>
<keyword id="KW-0547">Nucleotide-binding</keyword>
<keyword id="KW-1185">Reference proteome</keyword>
<feature type="chain" id="PRO_1000119869" description="ATP-dependent dethiobiotin synthetase BioD">
    <location>
        <begin position="1"/>
        <end position="226"/>
    </location>
</feature>
<feature type="active site" evidence="2">
    <location>
        <position position="39"/>
    </location>
</feature>
<feature type="binding site" evidence="2">
    <location>
        <begin position="12"/>
        <end position="17"/>
    </location>
    <ligand>
        <name>ATP</name>
        <dbReference type="ChEBI" id="CHEBI:30616"/>
    </ligand>
</feature>
<feature type="binding site" evidence="2">
    <location>
        <position position="16"/>
    </location>
    <ligand>
        <name>Mg(2+)</name>
        <dbReference type="ChEBI" id="CHEBI:18420"/>
    </ligand>
</feature>
<feature type="binding site" evidence="2">
    <location>
        <position position="43"/>
    </location>
    <ligand>
        <name>substrate</name>
    </ligand>
</feature>
<feature type="binding site" evidence="2">
    <location>
        <position position="47"/>
    </location>
    <ligand>
        <name>ATP</name>
        <dbReference type="ChEBI" id="CHEBI:30616"/>
    </ligand>
</feature>
<feature type="binding site" evidence="2">
    <location>
        <position position="47"/>
    </location>
    <ligand>
        <name>Mg(2+)</name>
        <dbReference type="ChEBI" id="CHEBI:18420"/>
    </ligand>
</feature>
<feature type="binding site" evidence="2">
    <location>
        <begin position="108"/>
        <end position="111"/>
    </location>
    <ligand>
        <name>ATP</name>
        <dbReference type="ChEBI" id="CHEBI:30616"/>
    </ligand>
</feature>
<feature type="binding site" evidence="2">
    <location>
        <position position="108"/>
    </location>
    <ligand>
        <name>Mg(2+)</name>
        <dbReference type="ChEBI" id="CHEBI:18420"/>
    </ligand>
</feature>
<feature type="binding site" evidence="2">
    <location>
        <begin position="168"/>
        <end position="169"/>
    </location>
    <ligand>
        <name>ATP</name>
        <dbReference type="ChEBI" id="CHEBI:30616"/>
    </ligand>
</feature>
<feature type="binding site" evidence="2">
    <location>
        <begin position="200"/>
        <end position="202"/>
    </location>
    <ligand>
        <name>ATP</name>
        <dbReference type="ChEBI" id="CHEBI:30616"/>
    </ligand>
</feature>
<name>BIOD_GLOC7</name>
<comment type="function">
    <text evidence="1 2">Catalyzes a mechanistically unusual reaction, the ATP-dependent insertion of CO2 between the N7 and N8 nitrogen atoms of 7,8-diaminopelargonic acid (DAPA, also called 7,8-diammoniononanoate) to form a ureido ring (By similarity). This cyanobacterium does not encode bioA (which catalyzes the formation of the precursor for this reaction in the cannonical pathway), instead it encodes bioU, which replaces bioA and also performs the first half of the cannonical BioD reaction. Thus in this organism BioD has a different substrate (By similarity).</text>
</comment>
<comment type="catalytic activity">
    <reaction evidence="2">
        <text>(7R,8S)-7,8-diammoniononanoate + CO2 + ATP = (4R,5S)-dethiobiotin + ADP + phosphate + 3 H(+)</text>
        <dbReference type="Rhea" id="RHEA:15805"/>
        <dbReference type="ChEBI" id="CHEBI:15378"/>
        <dbReference type="ChEBI" id="CHEBI:16526"/>
        <dbReference type="ChEBI" id="CHEBI:30616"/>
        <dbReference type="ChEBI" id="CHEBI:43474"/>
        <dbReference type="ChEBI" id="CHEBI:149469"/>
        <dbReference type="ChEBI" id="CHEBI:149473"/>
        <dbReference type="ChEBI" id="CHEBI:456216"/>
        <dbReference type="EC" id="6.3.3.3"/>
    </reaction>
</comment>
<comment type="catalytic activity">
    <reaction evidence="1 3">
        <text>(7R,8S)-8-amino-7-(carboxyamino)nonanoate + ATP = (4R,5S)-dethiobiotin + ADP + phosphate + H(+)</text>
        <dbReference type="Rhea" id="RHEA:63684"/>
        <dbReference type="ChEBI" id="CHEBI:15378"/>
        <dbReference type="ChEBI" id="CHEBI:30616"/>
        <dbReference type="ChEBI" id="CHEBI:43474"/>
        <dbReference type="ChEBI" id="CHEBI:149470"/>
        <dbReference type="ChEBI" id="CHEBI:149473"/>
        <dbReference type="ChEBI" id="CHEBI:456216"/>
    </reaction>
</comment>
<comment type="cofactor">
    <cofactor evidence="2">
        <name>Mg(2+)</name>
        <dbReference type="ChEBI" id="CHEBI:18420"/>
    </cofactor>
</comment>
<comment type="pathway">
    <text evidence="2">Cofactor biosynthesis; biotin biosynthesis; biotin from 7,8-diaminononanoate: step 1/2.</text>
</comment>
<comment type="subunit">
    <text evidence="2">Homodimer.</text>
</comment>
<comment type="subcellular location">
    <subcellularLocation>
        <location evidence="2">Cytoplasm</location>
    </subcellularLocation>
</comment>
<comment type="similarity">
    <text evidence="2">Belongs to the dethiobiotin synthetase family.</text>
</comment>
<gene>
    <name evidence="2" type="primary">bioD</name>
    <name type="ordered locus">PCC7424_4689</name>
</gene>
<reference key="1">
    <citation type="journal article" date="2011" name="MBio">
        <title>Novel metabolic attributes of the genus Cyanothece, comprising a group of unicellular nitrogen-fixing Cyanobacteria.</title>
        <authorList>
            <person name="Bandyopadhyay A."/>
            <person name="Elvitigala T."/>
            <person name="Welsh E."/>
            <person name="Stockel J."/>
            <person name="Liberton M."/>
            <person name="Min H."/>
            <person name="Sherman L.A."/>
            <person name="Pakrasi H.B."/>
        </authorList>
    </citation>
    <scope>NUCLEOTIDE SEQUENCE [LARGE SCALE GENOMIC DNA]</scope>
    <source>
        <strain>PCC 7424</strain>
    </source>
</reference>
<organism>
    <name type="scientific">Gloeothece citriformis (strain PCC 7424)</name>
    <name type="common">Cyanothece sp. (strain PCC 7424)</name>
    <dbReference type="NCBI Taxonomy" id="65393"/>
    <lineage>
        <taxon>Bacteria</taxon>
        <taxon>Bacillati</taxon>
        <taxon>Cyanobacteriota</taxon>
        <taxon>Cyanophyceae</taxon>
        <taxon>Oscillatoriophycideae</taxon>
        <taxon>Chroococcales</taxon>
        <taxon>Aphanothecaceae</taxon>
        <taxon>Gloeothece</taxon>
        <taxon>Gloeothece citriformis</taxon>
    </lineage>
</organism>